<evidence type="ECO:0000255" key="1">
    <source>
        <dbReference type="HAMAP-Rule" id="MF_00124"/>
    </source>
</evidence>
<protein>
    <recommendedName>
        <fullName evidence="1">Thymidine kinase</fullName>
        <ecNumber evidence="1">2.7.1.21</ecNumber>
    </recommendedName>
</protein>
<feature type="chain" id="PRO_0000242795" description="Thymidine kinase">
    <location>
        <begin position="1"/>
        <end position="209"/>
    </location>
</feature>
<feature type="active site" description="Proton acceptor" evidence="1">
    <location>
        <position position="104"/>
    </location>
</feature>
<feature type="binding site" evidence="1">
    <location>
        <begin position="25"/>
        <end position="32"/>
    </location>
    <ligand>
        <name>ATP</name>
        <dbReference type="ChEBI" id="CHEBI:30616"/>
    </ligand>
</feature>
<feature type="binding site" evidence="1">
    <location>
        <begin position="103"/>
        <end position="106"/>
    </location>
    <ligand>
        <name>ATP</name>
        <dbReference type="ChEBI" id="CHEBI:30616"/>
    </ligand>
</feature>
<feature type="binding site" evidence="1">
    <location>
        <position position="160"/>
    </location>
    <ligand>
        <name>Zn(2+)</name>
        <dbReference type="ChEBI" id="CHEBI:29105"/>
    </ligand>
</feature>
<feature type="binding site" evidence="1">
    <location>
        <position position="163"/>
    </location>
    <ligand>
        <name>Zn(2+)</name>
        <dbReference type="ChEBI" id="CHEBI:29105"/>
    </ligand>
</feature>
<feature type="binding site" evidence="1">
    <location>
        <position position="198"/>
    </location>
    <ligand>
        <name>Zn(2+)</name>
        <dbReference type="ChEBI" id="CHEBI:29105"/>
    </ligand>
</feature>
<feature type="binding site" evidence="1">
    <location>
        <position position="201"/>
    </location>
    <ligand>
        <name>Zn(2+)</name>
        <dbReference type="ChEBI" id="CHEBI:29105"/>
    </ligand>
</feature>
<proteinExistence type="inferred from homology"/>
<reference key="1">
    <citation type="submission" date="2005-09" db="EMBL/GenBank/DDBJ databases">
        <authorList>
            <person name="Glass J.I."/>
            <person name="Lartigue C."/>
            <person name="Pfannkoch C."/>
            <person name="Baden-Tillson H."/>
            <person name="Smith H.O."/>
            <person name="Venter J.C."/>
            <person name="Roske K."/>
            <person name="Wise K.S."/>
            <person name="Calcutt M.J."/>
            <person name="Nelson W.C."/>
            <person name="Nierman W.C."/>
        </authorList>
    </citation>
    <scope>NUCLEOTIDE SEQUENCE [LARGE SCALE GENOMIC DNA]</scope>
    <source>
        <strain>California kid / ATCC 27343 / NCTC 10154</strain>
    </source>
</reference>
<gene>
    <name evidence="1" type="primary">tdk</name>
    <name type="ordered locus">MCAP_0143</name>
</gene>
<dbReference type="EC" id="2.7.1.21" evidence="1"/>
<dbReference type="EMBL" id="CP000123">
    <property type="protein sequence ID" value="ABC01477.1"/>
    <property type="molecule type" value="Genomic_DNA"/>
</dbReference>
<dbReference type="RefSeq" id="WP_011387039.1">
    <property type="nucleotide sequence ID" value="NC_007633.1"/>
</dbReference>
<dbReference type="SMR" id="Q2SSX9"/>
<dbReference type="GeneID" id="23778904"/>
<dbReference type="KEGG" id="mcp:MCAP_0143"/>
<dbReference type="HOGENOM" id="CLU_064400_3_0_14"/>
<dbReference type="PhylomeDB" id="Q2SSX9"/>
<dbReference type="Proteomes" id="UP000001928">
    <property type="component" value="Chromosome"/>
</dbReference>
<dbReference type="GO" id="GO:0005829">
    <property type="term" value="C:cytosol"/>
    <property type="evidence" value="ECO:0007669"/>
    <property type="project" value="TreeGrafter"/>
</dbReference>
<dbReference type="GO" id="GO:0005524">
    <property type="term" value="F:ATP binding"/>
    <property type="evidence" value="ECO:0007669"/>
    <property type="project" value="UniProtKB-UniRule"/>
</dbReference>
<dbReference type="GO" id="GO:0004797">
    <property type="term" value="F:thymidine kinase activity"/>
    <property type="evidence" value="ECO:0007669"/>
    <property type="project" value="UniProtKB-UniRule"/>
</dbReference>
<dbReference type="GO" id="GO:0008270">
    <property type="term" value="F:zinc ion binding"/>
    <property type="evidence" value="ECO:0007669"/>
    <property type="project" value="UniProtKB-UniRule"/>
</dbReference>
<dbReference type="GO" id="GO:0071897">
    <property type="term" value="P:DNA biosynthetic process"/>
    <property type="evidence" value="ECO:0007669"/>
    <property type="project" value="UniProtKB-KW"/>
</dbReference>
<dbReference type="GO" id="GO:0046104">
    <property type="term" value="P:thymidine metabolic process"/>
    <property type="evidence" value="ECO:0007669"/>
    <property type="project" value="TreeGrafter"/>
</dbReference>
<dbReference type="Gene3D" id="3.30.60.20">
    <property type="match status" value="1"/>
</dbReference>
<dbReference type="Gene3D" id="3.40.50.300">
    <property type="entry name" value="P-loop containing nucleotide triphosphate hydrolases"/>
    <property type="match status" value="1"/>
</dbReference>
<dbReference type="HAMAP" id="MF_00124">
    <property type="entry name" value="Thymidine_kinase"/>
    <property type="match status" value="1"/>
</dbReference>
<dbReference type="InterPro" id="IPR027417">
    <property type="entry name" value="P-loop_NTPase"/>
</dbReference>
<dbReference type="InterPro" id="IPR001267">
    <property type="entry name" value="Thymidine_kinase"/>
</dbReference>
<dbReference type="InterPro" id="IPR020633">
    <property type="entry name" value="Thymidine_kinase_CS"/>
</dbReference>
<dbReference type="NCBIfam" id="NF003296">
    <property type="entry name" value="PRK04296.1-1"/>
    <property type="match status" value="1"/>
</dbReference>
<dbReference type="PANTHER" id="PTHR11441">
    <property type="entry name" value="THYMIDINE KINASE"/>
    <property type="match status" value="1"/>
</dbReference>
<dbReference type="PANTHER" id="PTHR11441:SF0">
    <property type="entry name" value="THYMIDINE KINASE, CYTOSOLIC"/>
    <property type="match status" value="1"/>
</dbReference>
<dbReference type="Pfam" id="PF00265">
    <property type="entry name" value="TK"/>
    <property type="match status" value="1"/>
</dbReference>
<dbReference type="PIRSF" id="PIRSF035805">
    <property type="entry name" value="TK_cell"/>
    <property type="match status" value="1"/>
</dbReference>
<dbReference type="SUPFAM" id="SSF57716">
    <property type="entry name" value="Glucocorticoid receptor-like (DNA-binding domain)"/>
    <property type="match status" value="1"/>
</dbReference>
<dbReference type="SUPFAM" id="SSF52540">
    <property type="entry name" value="P-loop containing nucleoside triphosphate hydrolases"/>
    <property type="match status" value="1"/>
</dbReference>
<dbReference type="PROSITE" id="PS00603">
    <property type="entry name" value="TK_CELLULAR_TYPE"/>
    <property type="match status" value="1"/>
</dbReference>
<sequence length="209" mass="23820">MTELDINEIEAYNSNKMGWIELITGCMFAGKTEEFIRRLKVLSYAKKRVLAFKPSIDNRYSVENIISHSGSKLDSYLVKSSDEIKQIVEKENQIQQVDVIGIDEVQFFDENVVDIIEQLADNGIIVIVNGLDKDFRGLPFKNVDKLLVKAEFVTKLRARCHLCGSFANRSQRIVNGQPALWDSPLILVDGKESYEARCRKCFISPKKDV</sequence>
<name>KITH_MYCCT</name>
<keyword id="KW-0067">ATP-binding</keyword>
<keyword id="KW-0963">Cytoplasm</keyword>
<keyword id="KW-0237">DNA synthesis</keyword>
<keyword id="KW-0418">Kinase</keyword>
<keyword id="KW-0479">Metal-binding</keyword>
<keyword id="KW-0547">Nucleotide-binding</keyword>
<keyword id="KW-0808">Transferase</keyword>
<keyword id="KW-0862">Zinc</keyword>
<comment type="catalytic activity">
    <reaction evidence="1">
        <text>thymidine + ATP = dTMP + ADP + H(+)</text>
        <dbReference type="Rhea" id="RHEA:19129"/>
        <dbReference type="ChEBI" id="CHEBI:15378"/>
        <dbReference type="ChEBI" id="CHEBI:17748"/>
        <dbReference type="ChEBI" id="CHEBI:30616"/>
        <dbReference type="ChEBI" id="CHEBI:63528"/>
        <dbReference type="ChEBI" id="CHEBI:456216"/>
        <dbReference type="EC" id="2.7.1.21"/>
    </reaction>
</comment>
<comment type="subunit">
    <text evidence="1">Homotetramer.</text>
</comment>
<comment type="subcellular location">
    <subcellularLocation>
        <location evidence="1">Cytoplasm</location>
    </subcellularLocation>
</comment>
<comment type="similarity">
    <text evidence="1">Belongs to the thymidine kinase family.</text>
</comment>
<organism>
    <name type="scientific">Mycoplasma capricolum subsp. capricolum (strain California kid / ATCC 27343 / NCTC 10154)</name>
    <dbReference type="NCBI Taxonomy" id="340047"/>
    <lineage>
        <taxon>Bacteria</taxon>
        <taxon>Bacillati</taxon>
        <taxon>Mycoplasmatota</taxon>
        <taxon>Mollicutes</taxon>
        <taxon>Mycoplasmataceae</taxon>
        <taxon>Mycoplasma</taxon>
    </lineage>
</organism>
<accession>Q2SSX9</accession>